<feature type="chain" id="PRO_1000046204" description="Large ribosomal subunit protein uL11">
    <location>
        <begin position="1"/>
        <end position="154"/>
    </location>
</feature>
<name>RL11_LEUMM</name>
<evidence type="ECO:0000255" key="1">
    <source>
        <dbReference type="HAMAP-Rule" id="MF_00736"/>
    </source>
</evidence>
<evidence type="ECO:0000305" key="2"/>
<accession>Q03ZH6</accession>
<gene>
    <name evidence="1" type="primary">rplK</name>
    <name type="ordered locus">LEUM_0269</name>
</gene>
<dbReference type="EMBL" id="CP000414">
    <property type="protein sequence ID" value="ABJ61396.1"/>
    <property type="molecule type" value="Genomic_DNA"/>
</dbReference>
<dbReference type="RefSeq" id="WP_010280693.1">
    <property type="nucleotide sequence ID" value="NC_008531.1"/>
</dbReference>
<dbReference type="SMR" id="Q03ZH6"/>
<dbReference type="EnsemblBacteria" id="ABJ61396">
    <property type="protein sequence ID" value="ABJ61396"/>
    <property type="gene ID" value="LEUM_0269"/>
</dbReference>
<dbReference type="GeneID" id="29576831"/>
<dbReference type="KEGG" id="lme:LEUM_0269"/>
<dbReference type="eggNOG" id="COG0080">
    <property type="taxonomic scope" value="Bacteria"/>
</dbReference>
<dbReference type="HOGENOM" id="CLU_074237_2_1_9"/>
<dbReference type="Proteomes" id="UP000000362">
    <property type="component" value="Chromosome"/>
</dbReference>
<dbReference type="GO" id="GO:0022625">
    <property type="term" value="C:cytosolic large ribosomal subunit"/>
    <property type="evidence" value="ECO:0007669"/>
    <property type="project" value="TreeGrafter"/>
</dbReference>
<dbReference type="GO" id="GO:0070180">
    <property type="term" value="F:large ribosomal subunit rRNA binding"/>
    <property type="evidence" value="ECO:0007669"/>
    <property type="project" value="UniProtKB-UniRule"/>
</dbReference>
<dbReference type="GO" id="GO:0003735">
    <property type="term" value="F:structural constituent of ribosome"/>
    <property type="evidence" value="ECO:0007669"/>
    <property type="project" value="InterPro"/>
</dbReference>
<dbReference type="GO" id="GO:0006412">
    <property type="term" value="P:translation"/>
    <property type="evidence" value="ECO:0007669"/>
    <property type="project" value="UniProtKB-UniRule"/>
</dbReference>
<dbReference type="CDD" id="cd00349">
    <property type="entry name" value="Ribosomal_L11"/>
    <property type="match status" value="1"/>
</dbReference>
<dbReference type="FunFam" id="1.10.10.250:FF:000001">
    <property type="entry name" value="50S ribosomal protein L11"/>
    <property type="match status" value="1"/>
</dbReference>
<dbReference type="FunFam" id="3.30.1550.10:FF:000001">
    <property type="entry name" value="50S ribosomal protein L11"/>
    <property type="match status" value="1"/>
</dbReference>
<dbReference type="Gene3D" id="1.10.10.250">
    <property type="entry name" value="Ribosomal protein L11, C-terminal domain"/>
    <property type="match status" value="1"/>
</dbReference>
<dbReference type="Gene3D" id="3.30.1550.10">
    <property type="entry name" value="Ribosomal protein L11/L12, N-terminal domain"/>
    <property type="match status" value="1"/>
</dbReference>
<dbReference type="HAMAP" id="MF_00736">
    <property type="entry name" value="Ribosomal_uL11"/>
    <property type="match status" value="1"/>
</dbReference>
<dbReference type="InterPro" id="IPR000911">
    <property type="entry name" value="Ribosomal_uL11"/>
</dbReference>
<dbReference type="InterPro" id="IPR006519">
    <property type="entry name" value="Ribosomal_uL11_bac-typ"/>
</dbReference>
<dbReference type="InterPro" id="IPR020783">
    <property type="entry name" value="Ribosomal_uL11_C"/>
</dbReference>
<dbReference type="InterPro" id="IPR036769">
    <property type="entry name" value="Ribosomal_uL11_C_sf"/>
</dbReference>
<dbReference type="InterPro" id="IPR020785">
    <property type="entry name" value="Ribosomal_uL11_CS"/>
</dbReference>
<dbReference type="InterPro" id="IPR020784">
    <property type="entry name" value="Ribosomal_uL11_N"/>
</dbReference>
<dbReference type="InterPro" id="IPR036796">
    <property type="entry name" value="Ribosomal_uL11_N_sf"/>
</dbReference>
<dbReference type="NCBIfam" id="TIGR01632">
    <property type="entry name" value="L11_bact"/>
    <property type="match status" value="1"/>
</dbReference>
<dbReference type="PANTHER" id="PTHR11661">
    <property type="entry name" value="60S RIBOSOMAL PROTEIN L12"/>
    <property type="match status" value="1"/>
</dbReference>
<dbReference type="PANTHER" id="PTHR11661:SF1">
    <property type="entry name" value="LARGE RIBOSOMAL SUBUNIT PROTEIN UL11M"/>
    <property type="match status" value="1"/>
</dbReference>
<dbReference type="Pfam" id="PF00298">
    <property type="entry name" value="Ribosomal_L11"/>
    <property type="match status" value="1"/>
</dbReference>
<dbReference type="Pfam" id="PF03946">
    <property type="entry name" value="Ribosomal_L11_N"/>
    <property type="match status" value="1"/>
</dbReference>
<dbReference type="SMART" id="SM00649">
    <property type="entry name" value="RL11"/>
    <property type="match status" value="1"/>
</dbReference>
<dbReference type="SUPFAM" id="SSF54747">
    <property type="entry name" value="Ribosomal L11/L12e N-terminal domain"/>
    <property type="match status" value="1"/>
</dbReference>
<dbReference type="SUPFAM" id="SSF46906">
    <property type="entry name" value="Ribosomal protein L11, C-terminal domain"/>
    <property type="match status" value="1"/>
</dbReference>
<dbReference type="PROSITE" id="PS00359">
    <property type="entry name" value="RIBOSOMAL_L11"/>
    <property type="match status" value="1"/>
</dbReference>
<reference key="1">
    <citation type="journal article" date="2006" name="Proc. Natl. Acad. Sci. U.S.A.">
        <title>Comparative genomics of the lactic acid bacteria.</title>
        <authorList>
            <person name="Makarova K.S."/>
            <person name="Slesarev A."/>
            <person name="Wolf Y.I."/>
            <person name="Sorokin A."/>
            <person name="Mirkin B."/>
            <person name="Koonin E.V."/>
            <person name="Pavlov A."/>
            <person name="Pavlova N."/>
            <person name="Karamychev V."/>
            <person name="Polouchine N."/>
            <person name="Shakhova V."/>
            <person name="Grigoriev I."/>
            <person name="Lou Y."/>
            <person name="Rohksar D."/>
            <person name="Lucas S."/>
            <person name="Huang K."/>
            <person name="Goodstein D.M."/>
            <person name="Hawkins T."/>
            <person name="Plengvidhya V."/>
            <person name="Welker D."/>
            <person name="Hughes J."/>
            <person name="Goh Y."/>
            <person name="Benson A."/>
            <person name="Baldwin K."/>
            <person name="Lee J.-H."/>
            <person name="Diaz-Muniz I."/>
            <person name="Dosti B."/>
            <person name="Smeianov V."/>
            <person name="Wechter W."/>
            <person name="Barabote R."/>
            <person name="Lorca G."/>
            <person name="Altermann E."/>
            <person name="Barrangou R."/>
            <person name="Ganesan B."/>
            <person name="Xie Y."/>
            <person name="Rawsthorne H."/>
            <person name="Tamir D."/>
            <person name="Parker C."/>
            <person name="Breidt F."/>
            <person name="Broadbent J.R."/>
            <person name="Hutkins R."/>
            <person name="O'Sullivan D."/>
            <person name="Steele J."/>
            <person name="Unlu G."/>
            <person name="Saier M.H. Jr."/>
            <person name="Klaenhammer T."/>
            <person name="Richardson P."/>
            <person name="Kozyavkin S."/>
            <person name="Weimer B.C."/>
            <person name="Mills D.A."/>
        </authorList>
    </citation>
    <scope>NUCLEOTIDE SEQUENCE [LARGE SCALE GENOMIC DNA]</scope>
    <source>
        <strain>ATCC 8293 / DSM 20343 / BCRC 11652 / CCM 1803 / JCM 6124 / NCDO 523 / NBRC 100496 / NCIMB 8023 / NCTC 12954 / NRRL B-1118 / 37Y</strain>
    </source>
</reference>
<proteinExistence type="inferred from homology"/>
<organism>
    <name type="scientific">Leuconostoc mesenteroides subsp. mesenteroides (strain ATCC 8293 / DSM 20343 / BCRC 11652 / CCM 1803 / JCM 6124 / NCDO 523 / NBRC 100496 / NCIMB 8023 / NCTC 12954 / NRRL B-1118 / 37Y)</name>
    <dbReference type="NCBI Taxonomy" id="203120"/>
    <lineage>
        <taxon>Bacteria</taxon>
        <taxon>Bacillati</taxon>
        <taxon>Bacillota</taxon>
        <taxon>Bacilli</taxon>
        <taxon>Lactobacillales</taxon>
        <taxon>Lactobacillaceae</taxon>
        <taxon>Leuconostoc</taxon>
    </lineage>
</organism>
<sequence length="154" mass="16179">MAKKVVNVVKLQIAAAKATPAPPVGPALGQAGINIAQFTKEFNARTADQAGSIIPVEISVFDDRSFEFVTKTPPAADQLRKIVGKGSGEPNTKKAGNVTLDQIRAIAENKMSDLNANDITNAMRMIEGTARSMGVTVDGVDLTVEGTAIKEDAE</sequence>
<protein>
    <recommendedName>
        <fullName evidence="1">Large ribosomal subunit protein uL11</fullName>
    </recommendedName>
    <alternativeName>
        <fullName evidence="2">50S ribosomal protein L11</fullName>
    </alternativeName>
</protein>
<keyword id="KW-0488">Methylation</keyword>
<keyword id="KW-1185">Reference proteome</keyword>
<keyword id="KW-0687">Ribonucleoprotein</keyword>
<keyword id="KW-0689">Ribosomal protein</keyword>
<keyword id="KW-0694">RNA-binding</keyword>
<keyword id="KW-0699">rRNA-binding</keyword>
<comment type="function">
    <text evidence="1">Forms part of the ribosomal stalk which helps the ribosome interact with GTP-bound translation factors.</text>
</comment>
<comment type="subunit">
    <text evidence="1">Part of the ribosomal stalk of the 50S ribosomal subunit. Interacts with L10 and the large rRNA to form the base of the stalk. L10 forms an elongated spine to which L12 dimers bind in a sequential fashion forming a multimeric L10(L12)X complex.</text>
</comment>
<comment type="PTM">
    <text evidence="1">One or more lysine residues are methylated.</text>
</comment>
<comment type="similarity">
    <text evidence="1">Belongs to the universal ribosomal protein uL11 family.</text>
</comment>